<proteinExistence type="inferred from homology"/>
<name>METE_AERS4</name>
<accession>A4SNB5</accession>
<sequence>MTRAHTLGFPRIGAKRELKFALESYWRGETTQAELIATGKSLRERHWQAQRTAGVNLLPVGDFAWYDQVLGTSLLVDAVPARHRHGDTDLDTLFRVARGRAPTGPSAAAAEMTKWFNTNYHYLVPEFSRDQRFKLGWSQLFDEVEEAKALGLPVKAVLLGPVSYLWLGKEKESGFSRLELLDRLLIVYQEILAKLAAQGVEWVQIDEPALALDLPDEWRLAYLNAYERLSGPCKLLLTTYFGSVAHQRDIITSLKVDGLHLDLVAAPEQLETLVPHLPAQWVLSAGVINGRNVWRANLAKLAPTLKALKEKLGERLWVASSCSLLHSPVDLTLEHELDPQTRSWFAFALQKCYELGLLSDYLDGGDLDKITAYSQPLVDRESDSRVHKKAVQSRLASLTNSDFDRQSAYPVRAQAQRNDLKLPLLPTTTIGSFPQTSEIRVLRQEWRAGRIDDSAYEAGIQAQIKDAIERQEAIGLDVLVHGEAERNDMVEYFGELLDGFAITRFGWVQSYGSRCVKPPVITTDIDRPTPMTLEWTKFAQSLTDKPVKGMLTGPVTILCWSFPREDVSREQSALQIGLAIRDEVADLEAAGIKIIQIDEPAIREGLPLRKQDHQAYLDWAVRAFRLSASPVVDSTQIHTHMCYSDFNLIIEAVAALDADVITIETSRSQMQLLEAFERFNYPNEIGPGVYDIHSPNVPSQGWIEDLIRKAAKQIPADRLWVNPDCGLKTRGWEETEAALKVMVNATKALRTELA</sequence>
<comment type="function">
    <text evidence="1">Catalyzes the transfer of a methyl group from 5-methyltetrahydrofolate to homocysteine resulting in methionine formation.</text>
</comment>
<comment type="catalytic activity">
    <reaction evidence="1">
        <text>5-methyltetrahydropteroyltri-L-glutamate + L-homocysteine = tetrahydropteroyltri-L-glutamate + L-methionine</text>
        <dbReference type="Rhea" id="RHEA:21196"/>
        <dbReference type="ChEBI" id="CHEBI:57844"/>
        <dbReference type="ChEBI" id="CHEBI:58140"/>
        <dbReference type="ChEBI" id="CHEBI:58199"/>
        <dbReference type="ChEBI" id="CHEBI:58207"/>
        <dbReference type="EC" id="2.1.1.14"/>
    </reaction>
</comment>
<comment type="cofactor">
    <cofactor evidence="1">
        <name>Zn(2+)</name>
        <dbReference type="ChEBI" id="CHEBI:29105"/>
    </cofactor>
    <text evidence="1">Binds 1 zinc ion per subunit.</text>
</comment>
<comment type="pathway">
    <text evidence="1">Amino-acid biosynthesis; L-methionine biosynthesis via de novo pathway; L-methionine from L-homocysteine (MetE route): step 1/1.</text>
</comment>
<comment type="similarity">
    <text evidence="1">Belongs to the vitamin-B12 independent methionine synthase family.</text>
</comment>
<protein>
    <recommendedName>
        <fullName evidence="1">5-methyltetrahydropteroyltriglutamate--homocysteine methyltransferase</fullName>
        <ecNumber evidence="1">2.1.1.14</ecNumber>
    </recommendedName>
    <alternativeName>
        <fullName evidence="1">Cobalamin-independent methionine synthase</fullName>
    </alternativeName>
    <alternativeName>
        <fullName evidence="1">Methionine synthase, vitamin-B12 independent isozyme</fullName>
    </alternativeName>
</protein>
<gene>
    <name evidence="1" type="primary">metE</name>
    <name type="ordered locus">ASA_2338</name>
</gene>
<organism>
    <name type="scientific">Aeromonas salmonicida (strain A449)</name>
    <dbReference type="NCBI Taxonomy" id="382245"/>
    <lineage>
        <taxon>Bacteria</taxon>
        <taxon>Pseudomonadati</taxon>
        <taxon>Pseudomonadota</taxon>
        <taxon>Gammaproteobacteria</taxon>
        <taxon>Aeromonadales</taxon>
        <taxon>Aeromonadaceae</taxon>
        <taxon>Aeromonas</taxon>
    </lineage>
</organism>
<dbReference type="EC" id="2.1.1.14" evidence="1"/>
<dbReference type="EMBL" id="CP000644">
    <property type="protein sequence ID" value="ABO90387.1"/>
    <property type="molecule type" value="Genomic_DNA"/>
</dbReference>
<dbReference type="RefSeq" id="WP_011898795.1">
    <property type="nucleotide sequence ID" value="NC_009348.1"/>
</dbReference>
<dbReference type="SMR" id="A4SNB5"/>
<dbReference type="STRING" id="29491.GCA_000820065_01591"/>
<dbReference type="KEGG" id="asa:ASA_2338"/>
<dbReference type="eggNOG" id="COG0620">
    <property type="taxonomic scope" value="Bacteria"/>
</dbReference>
<dbReference type="HOGENOM" id="CLU_013175_0_0_6"/>
<dbReference type="UniPathway" id="UPA00051">
    <property type="reaction ID" value="UER00082"/>
</dbReference>
<dbReference type="Proteomes" id="UP000000225">
    <property type="component" value="Chromosome"/>
</dbReference>
<dbReference type="GO" id="GO:0003871">
    <property type="term" value="F:5-methyltetrahydropteroyltriglutamate-homocysteine S-methyltransferase activity"/>
    <property type="evidence" value="ECO:0007669"/>
    <property type="project" value="UniProtKB-UniRule"/>
</dbReference>
<dbReference type="GO" id="GO:0008270">
    <property type="term" value="F:zinc ion binding"/>
    <property type="evidence" value="ECO:0007669"/>
    <property type="project" value="InterPro"/>
</dbReference>
<dbReference type="GO" id="GO:0009086">
    <property type="term" value="P:methionine biosynthetic process"/>
    <property type="evidence" value="ECO:0007669"/>
    <property type="project" value="UniProtKB-UniRule"/>
</dbReference>
<dbReference type="GO" id="GO:0032259">
    <property type="term" value="P:methylation"/>
    <property type="evidence" value="ECO:0007669"/>
    <property type="project" value="UniProtKB-KW"/>
</dbReference>
<dbReference type="CDD" id="cd03311">
    <property type="entry name" value="CIMS_C_terminal_like"/>
    <property type="match status" value="1"/>
</dbReference>
<dbReference type="CDD" id="cd03312">
    <property type="entry name" value="CIMS_N_terminal_like"/>
    <property type="match status" value="1"/>
</dbReference>
<dbReference type="FunFam" id="3.20.20.210:FF:000002">
    <property type="entry name" value="5-methyltetrahydropteroyltriglutamate--homocysteine methyltransferase"/>
    <property type="match status" value="1"/>
</dbReference>
<dbReference type="Gene3D" id="3.20.20.210">
    <property type="match status" value="2"/>
</dbReference>
<dbReference type="HAMAP" id="MF_00172">
    <property type="entry name" value="Meth_synth"/>
    <property type="match status" value="1"/>
</dbReference>
<dbReference type="InterPro" id="IPR013215">
    <property type="entry name" value="Cbl-indep_Met_Synth_N"/>
</dbReference>
<dbReference type="InterPro" id="IPR006276">
    <property type="entry name" value="Cobalamin-indep_Met_synthase"/>
</dbReference>
<dbReference type="InterPro" id="IPR002629">
    <property type="entry name" value="Met_Synth_C/arc"/>
</dbReference>
<dbReference type="InterPro" id="IPR038071">
    <property type="entry name" value="UROD/MetE-like_sf"/>
</dbReference>
<dbReference type="NCBIfam" id="TIGR01371">
    <property type="entry name" value="met_syn_B12ind"/>
    <property type="match status" value="1"/>
</dbReference>
<dbReference type="NCBIfam" id="NF003556">
    <property type="entry name" value="PRK05222.1"/>
    <property type="match status" value="1"/>
</dbReference>
<dbReference type="PANTHER" id="PTHR30519">
    <property type="entry name" value="5-METHYLTETRAHYDROPTEROYLTRIGLUTAMATE--HOMOCYSTEINE METHYLTRANSFERASE"/>
    <property type="match status" value="1"/>
</dbReference>
<dbReference type="Pfam" id="PF08267">
    <property type="entry name" value="Meth_synt_1"/>
    <property type="match status" value="1"/>
</dbReference>
<dbReference type="Pfam" id="PF01717">
    <property type="entry name" value="Meth_synt_2"/>
    <property type="match status" value="1"/>
</dbReference>
<dbReference type="PIRSF" id="PIRSF000382">
    <property type="entry name" value="MeTrfase_B12_ind"/>
    <property type="match status" value="1"/>
</dbReference>
<dbReference type="SUPFAM" id="SSF51726">
    <property type="entry name" value="UROD/MetE-like"/>
    <property type="match status" value="2"/>
</dbReference>
<reference key="1">
    <citation type="journal article" date="2008" name="BMC Genomics">
        <title>The genome of Aeromonas salmonicida subsp. salmonicida A449: insights into the evolution of a fish pathogen.</title>
        <authorList>
            <person name="Reith M.E."/>
            <person name="Singh R.K."/>
            <person name="Curtis B."/>
            <person name="Boyd J.M."/>
            <person name="Bouevitch A."/>
            <person name="Kimball J."/>
            <person name="Munholland J."/>
            <person name="Murphy C."/>
            <person name="Sarty D."/>
            <person name="Williams J."/>
            <person name="Nash J.H."/>
            <person name="Johnson S.C."/>
            <person name="Brown L.L."/>
        </authorList>
    </citation>
    <scope>NUCLEOTIDE SEQUENCE [LARGE SCALE GENOMIC DNA]</scope>
    <source>
        <strain>A449</strain>
    </source>
</reference>
<keyword id="KW-0028">Amino-acid biosynthesis</keyword>
<keyword id="KW-0479">Metal-binding</keyword>
<keyword id="KW-0486">Methionine biosynthesis</keyword>
<keyword id="KW-0489">Methyltransferase</keyword>
<keyword id="KW-0677">Repeat</keyword>
<keyword id="KW-0808">Transferase</keyword>
<keyword id="KW-0862">Zinc</keyword>
<evidence type="ECO:0000255" key="1">
    <source>
        <dbReference type="HAMAP-Rule" id="MF_00172"/>
    </source>
</evidence>
<feature type="chain" id="PRO_1000017216" description="5-methyltetrahydropteroyltriglutamate--homocysteine methyltransferase">
    <location>
        <begin position="1"/>
        <end position="754"/>
    </location>
</feature>
<feature type="active site" description="Proton donor" evidence="1">
    <location>
        <position position="693"/>
    </location>
</feature>
<feature type="binding site" evidence="1">
    <location>
        <begin position="16"/>
        <end position="19"/>
    </location>
    <ligand>
        <name>5-methyltetrahydropteroyltri-L-glutamate</name>
        <dbReference type="ChEBI" id="CHEBI:58207"/>
    </ligand>
</feature>
<feature type="binding site" evidence="1">
    <location>
        <position position="114"/>
    </location>
    <ligand>
        <name>5-methyltetrahydropteroyltri-L-glutamate</name>
        <dbReference type="ChEBI" id="CHEBI:58207"/>
    </ligand>
</feature>
<feature type="binding site" evidence="1">
    <location>
        <begin position="430"/>
        <end position="432"/>
    </location>
    <ligand>
        <name>L-homocysteine</name>
        <dbReference type="ChEBI" id="CHEBI:58199"/>
    </ligand>
</feature>
<feature type="binding site" evidence="1">
    <location>
        <begin position="430"/>
        <end position="432"/>
    </location>
    <ligand>
        <name>L-methionine</name>
        <dbReference type="ChEBI" id="CHEBI:57844"/>
    </ligand>
</feature>
<feature type="binding site" evidence="1">
    <location>
        <position position="483"/>
    </location>
    <ligand>
        <name>L-homocysteine</name>
        <dbReference type="ChEBI" id="CHEBI:58199"/>
    </ligand>
</feature>
<feature type="binding site" evidence="1">
    <location>
        <position position="483"/>
    </location>
    <ligand>
        <name>L-methionine</name>
        <dbReference type="ChEBI" id="CHEBI:57844"/>
    </ligand>
</feature>
<feature type="binding site" evidence="1">
    <location>
        <begin position="514"/>
        <end position="515"/>
    </location>
    <ligand>
        <name>5-methyltetrahydropteroyltri-L-glutamate</name>
        <dbReference type="ChEBI" id="CHEBI:58207"/>
    </ligand>
</feature>
<feature type="binding site" evidence="1">
    <location>
        <position position="560"/>
    </location>
    <ligand>
        <name>5-methyltetrahydropteroyltri-L-glutamate</name>
        <dbReference type="ChEBI" id="CHEBI:58207"/>
    </ligand>
</feature>
<feature type="binding site" evidence="1">
    <location>
        <position position="598"/>
    </location>
    <ligand>
        <name>L-homocysteine</name>
        <dbReference type="ChEBI" id="CHEBI:58199"/>
    </ligand>
</feature>
<feature type="binding site" evidence="1">
    <location>
        <position position="598"/>
    </location>
    <ligand>
        <name>L-methionine</name>
        <dbReference type="ChEBI" id="CHEBI:57844"/>
    </ligand>
</feature>
<feature type="binding site" evidence="1">
    <location>
        <position position="604"/>
    </location>
    <ligand>
        <name>5-methyltetrahydropteroyltri-L-glutamate</name>
        <dbReference type="ChEBI" id="CHEBI:58207"/>
    </ligand>
</feature>
<feature type="binding site" evidence="1">
    <location>
        <position position="640"/>
    </location>
    <ligand>
        <name>Zn(2+)</name>
        <dbReference type="ChEBI" id="CHEBI:29105"/>
        <note>catalytic</note>
    </ligand>
</feature>
<feature type="binding site" evidence="1">
    <location>
        <position position="642"/>
    </location>
    <ligand>
        <name>Zn(2+)</name>
        <dbReference type="ChEBI" id="CHEBI:29105"/>
        <note>catalytic</note>
    </ligand>
</feature>
<feature type="binding site" evidence="1">
    <location>
        <position position="664"/>
    </location>
    <ligand>
        <name>Zn(2+)</name>
        <dbReference type="ChEBI" id="CHEBI:29105"/>
        <note>catalytic</note>
    </ligand>
</feature>
<feature type="binding site" evidence="1">
    <location>
        <position position="725"/>
    </location>
    <ligand>
        <name>Zn(2+)</name>
        <dbReference type="ChEBI" id="CHEBI:29105"/>
        <note>catalytic</note>
    </ligand>
</feature>